<feature type="signal peptide" evidence="2">
    <location>
        <begin position="1"/>
        <end position="18"/>
    </location>
</feature>
<feature type="propeptide" id="PRO_0000417000" evidence="4">
    <location>
        <begin position="19"/>
        <end position="24"/>
    </location>
</feature>
<feature type="chain" id="PRO_0000417001" description="Alpha- and beta-fibrinogenase OhS1">
    <location>
        <begin position="25"/>
        <end position="260"/>
    </location>
</feature>
<feature type="domain" description="Peptidase S1" evidence="3">
    <location>
        <begin position="25"/>
        <end position="248"/>
    </location>
</feature>
<feature type="active site" description="Charge relay system" evidence="1">
    <location>
        <position position="65"/>
    </location>
</feature>
<feature type="active site" description="Charge relay system" evidence="1">
    <location>
        <position position="110"/>
    </location>
</feature>
<feature type="active site" description="Charge relay system" evidence="1">
    <location>
        <position position="203"/>
    </location>
</feature>
<feature type="glycosylation site" description="N-linked (GlcNAc...) asparagine" evidence="2">
    <location>
        <position position="44"/>
    </location>
</feature>
<feature type="glycosylation site" description="N-linked (GlcNAc...) asparagine" evidence="2">
    <location>
        <position position="79"/>
    </location>
</feature>
<feature type="glycosylation site" description="N-linked (GlcNAc...) asparagine" evidence="2">
    <location>
        <position position="117"/>
    </location>
</feature>
<feature type="glycosylation site" description="N-linked (GlcNAc...) asparagine" evidence="2">
    <location>
        <position position="121"/>
    </location>
</feature>
<feature type="glycosylation site" description="N-linked (GlcNAc...) asparagine" evidence="2">
    <location>
        <position position="250"/>
    </location>
</feature>
<feature type="disulfide bond" evidence="3">
    <location>
        <begin position="31"/>
        <end position="163"/>
    </location>
</feature>
<feature type="disulfide bond" evidence="3">
    <location>
        <begin position="50"/>
        <end position="66"/>
    </location>
</feature>
<feature type="disulfide bond" evidence="3">
    <location>
        <begin position="98"/>
        <end position="255"/>
    </location>
</feature>
<feature type="disulfide bond" evidence="3">
    <location>
        <begin position="142"/>
        <end position="209"/>
    </location>
</feature>
<feature type="disulfide bond" evidence="3">
    <location>
        <begin position="174"/>
        <end position="188"/>
    </location>
</feature>
<feature type="disulfide bond" evidence="3">
    <location>
        <begin position="199"/>
        <end position="224"/>
    </location>
</feature>
<proteinExistence type="evidence at protein level"/>
<accession>A8QL56</accession>
<evidence type="ECO:0000250" key="1"/>
<evidence type="ECO:0000255" key="2"/>
<evidence type="ECO:0000255" key="3">
    <source>
        <dbReference type="PROSITE-ProRule" id="PRU00274"/>
    </source>
</evidence>
<evidence type="ECO:0000269" key="4">
    <source>
    </source>
</evidence>
<evidence type="ECO:0000269" key="5">
    <source>
    </source>
</evidence>
<evidence type="ECO:0000305" key="6">
    <source>
    </source>
</evidence>
<protein>
    <recommendedName>
        <fullName>Alpha- and beta-fibrinogenase OhS1</fullName>
        <ecNumber>3.4.21.-</ecNumber>
    </recommendedName>
    <alternativeName>
        <fullName>Snake venom serine protease</fullName>
        <shortName>SVSP</shortName>
    </alternativeName>
</protein>
<organism>
    <name type="scientific">Ophiophagus hannah</name>
    <name type="common">King cobra</name>
    <name type="synonym">Naja hannah</name>
    <dbReference type="NCBI Taxonomy" id="8665"/>
    <lineage>
        <taxon>Eukaryota</taxon>
        <taxon>Metazoa</taxon>
        <taxon>Chordata</taxon>
        <taxon>Craniata</taxon>
        <taxon>Vertebrata</taxon>
        <taxon>Euteleostomi</taxon>
        <taxon>Lepidosauria</taxon>
        <taxon>Squamata</taxon>
        <taxon>Bifurcata</taxon>
        <taxon>Unidentata</taxon>
        <taxon>Episquamata</taxon>
        <taxon>Toxicofera</taxon>
        <taxon>Serpentes</taxon>
        <taxon>Colubroidea</taxon>
        <taxon>Elapidae</taxon>
        <taxon>Elapinae</taxon>
        <taxon>Ophiophagus</taxon>
    </lineage>
</organism>
<dbReference type="EC" id="3.4.21.-"/>
<dbReference type="EMBL" id="EF080837">
    <property type="protein sequence ID" value="ABN72544.1"/>
    <property type="molecule type" value="mRNA"/>
</dbReference>
<dbReference type="SMR" id="A8QL56"/>
<dbReference type="MEROPS" id="S01.481"/>
<dbReference type="SABIO-RK" id="A8QL56"/>
<dbReference type="GO" id="GO:0005576">
    <property type="term" value="C:extracellular region"/>
    <property type="evidence" value="ECO:0007669"/>
    <property type="project" value="UniProtKB-SubCell"/>
</dbReference>
<dbReference type="GO" id="GO:0030141">
    <property type="term" value="C:secretory granule"/>
    <property type="evidence" value="ECO:0007669"/>
    <property type="project" value="TreeGrafter"/>
</dbReference>
<dbReference type="GO" id="GO:0004252">
    <property type="term" value="F:serine-type endopeptidase activity"/>
    <property type="evidence" value="ECO:0007669"/>
    <property type="project" value="InterPro"/>
</dbReference>
<dbReference type="GO" id="GO:0090729">
    <property type="term" value="F:toxin activity"/>
    <property type="evidence" value="ECO:0007669"/>
    <property type="project" value="UniProtKB-KW"/>
</dbReference>
<dbReference type="GO" id="GO:0006508">
    <property type="term" value="P:proteolysis"/>
    <property type="evidence" value="ECO:0007669"/>
    <property type="project" value="UniProtKB-KW"/>
</dbReference>
<dbReference type="CDD" id="cd00190">
    <property type="entry name" value="Tryp_SPc"/>
    <property type="match status" value="1"/>
</dbReference>
<dbReference type="FunFam" id="2.40.10.10:FF:000010">
    <property type="entry name" value="Kallikrein related peptidase 11"/>
    <property type="match status" value="1"/>
</dbReference>
<dbReference type="Gene3D" id="2.40.10.10">
    <property type="entry name" value="Trypsin-like serine proteases"/>
    <property type="match status" value="2"/>
</dbReference>
<dbReference type="InterPro" id="IPR009003">
    <property type="entry name" value="Peptidase_S1_PA"/>
</dbReference>
<dbReference type="InterPro" id="IPR043504">
    <property type="entry name" value="Peptidase_S1_PA_chymotrypsin"/>
</dbReference>
<dbReference type="InterPro" id="IPR001314">
    <property type="entry name" value="Peptidase_S1A"/>
</dbReference>
<dbReference type="InterPro" id="IPR001254">
    <property type="entry name" value="Trypsin_dom"/>
</dbReference>
<dbReference type="InterPro" id="IPR018114">
    <property type="entry name" value="TRYPSIN_HIS"/>
</dbReference>
<dbReference type="InterPro" id="IPR033116">
    <property type="entry name" value="TRYPSIN_SER"/>
</dbReference>
<dbReference type="PANTHER" id="PTHR24271:SF47">
    <property type="entry name" value="KALLIKREIN-1"/>
    <property type="match status" value="1"/>
</dbReference>
<dbReference type="PANTHER" id="PTHR24271">
    <property type="entry name" value="KALLIKREIN-RELATED"/>
    <property type="match status" value="1"/>
</dbReference>
<dbReference type="Pfam" id="PF00089">
    <property type="entry name" value="Trypsin"/>
    <property type="match status" value="1"/>
</dbReference>
<dbReference type="PRINTS" id="PR00722">
    <property type="entry name" value="CHYMOTRYPSIN"/>
</dbReference>
<dbReference type="SMART" id="SM00020">
    <property type="entry name" value="Tryp_SPc"/>
    <property type="match status" value="1"/>
</dbReference>
<dbReference type="SUPFAM" id="SSF50494">
    <property type="entry name" value="Trypsin-like serine proteases"/>
    <property type="match status" value="1"/>
</dbReference>
<dbReference type="PROSITE" id="PS50240">
    <property type="entry name" value="TRYPSIN_DOM"/>
    <property type="match status" value="1"/>
</dbReference>
<dbReference type="PROSITE" id="PS00134">
    <property type="entry name" value="TRYPSIN_HIS"/>
    <property type="match status" value="1"/>
</dbReference>
<dbReference type="PROSITE" id="PS00135">
    <property type="entry name" value="TRYPSIN_SER"/>
    <property type="match status" value="1"/>
</dbReference>
<sequence length="260" mass="28656">MALIRVLASLLILQLSYAVTPFDRIIGGFECNEYEHRSLVHLYNSSGFFCSGTLLNHEWVLTAAHCNRDDIQIKLGVHNVSVNYEDEQIRVPKEKLCCHSTNNCTQLGQDIMLIRLNSSVNYSEHIAPLSLPSNRPSMGSVCRVMGWGLLTSPEVTFPKVPHCVDINILHIQVCQAAYPSMSENYLLCAGVLEGGKDSCKGDSGGPLICNREIQGIVSWGGFPCAQLLEPGVYTKVFDYIDWIEGIIAGNTSVTCPSDNF</sequence>
<name>VSP1_OPHHA</name>
<keyword id="KW-0903">Direct protein sequencing</keyword>
<keyword id="KW-1015">Disulfide bond</keyword>
<keyword id="KW-1206">Fibrinogenolytic toxin</keyword>
<keyword id="KW-0325">Glycoprotein</keyword>
<keyword id="KW-1199">Hemostasis impairing toxin</keyword>
<keyword id="KW-0378">Hydrolase</keyword>
<keyword id="KW-0645">Protease</keyword>
<keyword id="KW-0964">Secreted</keyword>
<keyword id="KW-0720">Serine protease</keyword>
<keyword id="KW-0732">Signal</keyword>
<keyword id="KW-0800">Toxin</keyword>
<reference key="1">
    <citation type="journal article" date="2007" name="Toxicon">
        <title>Molecular cloning of serine proteases from elapid snake venoms.</title>
        <authorList>
            <person name="Jin Y."/>
            <person name="Lee W.H."/>
            <person name="Zhang Y."/>
        </authorList>
    </citation>
    <scope>NUCLEOTIDE SEQUENCE [MRNA]</scope>
    <scope>PROTEIN SEQUENCE OF 25-47</scope>
    <source>
        <tissue>Venom</tissue>
        <tissue>Venom gland</tissue>
    </source>
</reference>
<reference key="2">
    <citation type="journal article" date="1994" name="Toxicon">
        <title>Characterization of OhS1, an arginine/lysine amidase from the venom of king cobra (Ophiophagus hannah).</title>
        <authorList>
            <person name="Zhang Y."/>
            <person name="Lee W.H."/>
            <person name="Xiong Y.L."/>
            <person name="Wang W.Y."/>
            <person name="Zu S.W."/>
        </authorList>
    </citation>
    <scope>FUNCTION</scope>
    <scope>CATALYTIC ACTIVITY</scope>
    <scope>ACTIVITY REGULATION</scope>
    <scope>SUBUNIT</scope>
</reference>
<reference key="3">
    <citation type="journal article" date="2013" name="Proc. Natl. Acad. Sci. U.S.A.">
        <title>The king cobra genome reveals dynamic gene evolution and adaptation in the snake venom system.</title>
        <authorList>
            <person name="Vonk F.J."/>
            <person name="Casewell N.R."/>
            <person name="Henkel C.V."/>
            <person name="Heimberg A.M."/>
            <person name="Jansen H.J."/>
            <person name="McCleary R.J."/>
            <person name="Kerkkamp H.M."/>
            <person name="Vos R.A."/>
            <person name="Guerreiro I."/>
            <person name="Calvete J.J."/>
            <person name="Wuster W."/>
            <person name="Woods A.E."/>
            <person name="Logan J.M."/>
            <person name="Harrison R.A."/>
            <person name="Castoe T.A."/>
            <person name="de Koning A.P."/>
            <person name="Pollock D.D."/>
            <person name="Yandell M."/>
            <person name="Calderon D."/>
            <person name="Renjifo C."/>
            <person name="Currier R.B."/>
            <person name="Salgado D."/>
            <person name="Pla D."/>
            <person name="Sanz L."/>
            <person name="Hyder A.S."/>
            <person name="Ribeiro J.M."/>
            <person name="Arntzen J.W."/>
            <person name="van den Thillart G.E."/>
            <person name="Boetzer M."/>
            <person name="Pirovano W."/>
            <person name="Dirks R.P."/>
            <person name="Spaink H.P."/>
            <person name="Duboule D."/>
            <person name="McGlinn E."/>
            <person name="Kini R.M."/>
            <person name="Richardson M.K."/>
        </authorList>
    </citation>
    <scope>IDENTIFICATION BY MASS SPECTROMETRY</scope>
    <source>
        <tissue>Venom</tissue>
    </source>
</reference>
<comment type="function">
    <text evidence="5">Snake venom serine protease that possesses potent fibrinogenolytic (on both alpha- (FGA) and beta-chains (FGB)) and amidolytic activities. Selectively cleaves Arg-|-Xaa or Lys-|-Xaa bonds.</text>
</comment>
<comment type="activity regulation">
    <text evidence="5">Completely inhibited by NPGB, PMSF, diisopropylfluorophosphate (DFP), benzamidine and soybean trypsin inhibitor. Not inhibited by EDTA.</text>
</comment>
<comment type="subunit">
    <text evidence="5">Monomer.</text>
</comment>
<comment type="subcellular location">
    <subcellularLocation>
        <location>Secreted</location>
    </subcellularLocation>
</comment>
<comment type="tissue specificity">
    <text>Expressed by the venom gland.</text>
</comment>
<comment type="miscellaneous">
    <text evidence="6">Negative results: does not hydrolyze casein. Does not clot fibrinogen or act on factor X, prothrombin and plasminogen. Does not have hemorrhagic activity (PubMed:8079373).</text>
</comment>
<comment type="similarity">
    <text evidence="3">Belongs to the peptidase S1 family. Snake venom subfamily.</text>
</comment>